<reference key="1">
    <citation type="journal article" date="2006" name="Nature">
        <title>Insights from the genome of the biotrophic fungal plant pathogen Ustilago maydis.</title>
        <authorList>
            <person name="Kaemper J."/>
            <person name="Kahmann R."/>
            <person name="Boelker M."/>
            <person name="Ma L.-J."/>
            <person name="Brefort T."/>
            <person name="Saville B.J."/>
            <person name="Banuett F."/>
            <person name="Kronstad J.W."/>
            <person name="Gold S.E."/>
            <person name="Mueller O."/>
            <person name="Perlin M.H."/>
            <person name="Woesten H.A.B."/>
            <person name="de Vries R."/>
            <person name="Ruiz-Herrera J."/>
            <person name="Reynaga-Pena C.G."/>
            <person name="Snetselaar K."/>
            <person name="McCann M."/>
            <person name="Perez-Martin J."/>
            <person name="Feldbruegge M."/>
            <person name="Basse C.W."/>
            <person name="Steinberg G."/>
            <person name="Ibeas J.I."/>
            <person name="Holloman W."/>
            <person name="Guzman P."/>
            <person name="Farman M.L."/>
            <person name="Stajich J.E."/>
            <person name="Sentandreu R."/>
            <person name="Gonzalez-Prieto J.M."/>
            <person name="Kennell J.C."/>
            <person name="Molina L."/>
            <person name="Schirawski J."/>
            <person name="Mendoza-Mendoza A."/>
            <person name="Greilinger D."/>
            <person name="Muench K."/>
            <person name="Roessel N."/>
            <person name="Scherer M."/>
            <person name="Vranes M."/>
            <person name="Ladendorf O."/>
            <person name="Vincon V."/>
            <person name="Fuchs U."/>
            <person name="Sandrock B."/>
            <person name="Meng S."/>
            <person name="Ho E.C.H."/>
            <person name="Cahill M.J."/>
            <person name="Boyce K.J."/>
            <person name="Klose J."/>
            <person name="Klosterman S.J."/>
            <person name="Deelstra H.J."/>
            <person name="Ortiz-Castellanos L."/>
            <person name="Li W."/>
            <person name="Sanchez-Alonso P."/>
            <person name="Schreier P.H."/>
            <person name="Haeuser-Hahn I."/>
            <person name="Vaupel M."/>
            <person name="Koopmann E."/>
            <person name="Friedrich G."/>
            <person name="Voss H."/>
            <person name="Schlueter T."/>
            <person name="Margolis J."/>
            <person name="Platt D."/>
            <person name="Swimmer C."/>
            <person name="Gnirke A."/>
            <person name="Chen F."/>
            <person name="Vysotskaia V."/>
            <person name="Mannhaupt G."/>
            <person name="Gueldener U."/>
            <person name="Muensterkoetter M."/>
            <person name="Haase D."/>
            <person name="Oesterheld M."/>
            <person name="Mewes H.-W."/>
            <person name="Mauceli E.W."/>
            <person name="DeCaprio D."/>
            <person name="Wade C.M."/>
            <person name="Butler J."/>
            <person name="Young S.K."/>
            <person name="Jaffe D.B."/>
            <person name="Calvo S.E."/>
            <person name="Nusbaum C."/>
            <person name="Galagan J.E."/>
            <person name="Birren B.W."/>
        </authorList>
    </citation>
    <scope>NUCLEOTIDE SEQUENCE [LARGE SCALE GENOMIC DNA]</scope>
    <source>
        <strain>DSM 14603 / FGSC 9021 / UM521</strain>
    </source>
</reference>
<reference key="2">
    <citation type="submission" date="2014-09" db="EMBL/GenBank/DDBJ databases">
        <authorList>
            <person name="Gueldener U."/>
            <person name="Muensterkoetter M."/>
            <person name="Walter M.C."/>
            <person name="Mannhaupt G."/>
            <person name="Kahmann R."/>
        </authorList>
    </citation>
    <scope>GENOME REANNOTATION</scope>
    <source>
        <strain>DSM 14603 / FGSC 9021 / UM521</strain>
    </source>
</reference>
<accession>P0CT24</accession>
<accession>A0A0D1DMI5</accession>
<accession>Q4P0B9</accession>
<protein>
    <recommendedName>
        <fullName>Glucosidase 2 subunit beta</fullName>
    </recommendedName>
    <alternativeName>
        <fullName>Alpha-glucosidase 2 subunit beta</fullName>
    </alternativeName>
</protein>
<dbReference type="EMBL" id="CM003162">
    <property type="protein sequence ID" value="KIS65739.1"/>
    <property type="molecule type" value="Genomic_DNA"/>
</dbReference>
<dbReference type="RefSeq" id="XP_011392753.1">
    <property type="nucleotide sequence ID" value="XM_011394451.1"/>
</dbReference>
<dbReference type="SMR" id="P0CT24"/>
<dbReference type="FunCoup" id="P0CT24">
    <property type="interactions" value="603"/>
</dbReference>
<dbReference type="STRING" id="237631.P0CT24"/>
<dbReference type="EnsemblFungi" id="KIS65739">
    <property type="protein sequence ID" value="KIS65739"/>
    <property type="gene ID" value="UMAG_12045"/>
</dbReference>
<dbReference type="GeneID" id="23567831"/>
<dbReference type="KEGG" id="uma:UMAG_12045"/>
<dbReference type="VEuPathDB" id="FungiDB:UMAG_12045"/>
<dbReference type="eggNOG" id="KOG2397">
    <property type="taxonomic scope" value="Eukaryota"/>
</dbReference>
<dbReference type="InParanoid" id="P0CT24"/>
<dbReference type="OrthoDB" id="202234at2759"/>
<dbReference type="Proteomes" id="UP000000561">
    <property type="component" value="Chromosome 23"/>
</dbReference>
<dbReference type="GO" id="GO:0017177">
    <property type="term" value="C:glucosidase II complex"/>
    <property type="evidence" value="ECO:0000318"/>
    <property type="project" value="GO_Central"/>
</dbReference>
<dbReference type="GO" id="GO:0006491">
    <property type="term" value="P:N-glycan processing"/>
    <property type="evidence" value="ECO:0000318"/>
    <property type="project" value="GO_Central"/>
</dbReference>
<dbReference type="Gene3D" id="2.70.130.10">
    <property type="entry name" value="Mannose-6-phosphate receptor binding domain"/>
    <property type="match status" value="1"/>
</dbReference>
<dbReference type="InterPro" id="IPR039794">
    <property type="entry name" value="Gtb1-like"/>
</dbReference>
<dbReference type="InterPro" id="IPR009011">
    <property type="entry name" value="Man6P_isomerase_rcpt-bd_dom_sf"/>
</dbReference>
<dbReference type="InterPro" id="IPR044865">
    <property type="entry name" value="MRH_dom"/>
</dbReference>
<dbReference type="InterPro" id="IPR036607">
    <property type="entry name" value="PRKCSH"/>
</dbReference>
<dbReference type="InterPro" id="IPR028146">
    <property type="entry name" value="PRKCSH_N"/>
</dbReference>
<dbReference type="PANTHER" id="PTHR12630:SF1">
    <property type="entry name" value="GLUCOSIDASE 2 SUBUNIT BETA"/>
    <property type="match status" value="1"/>
</dbReference>
<dbReference type="PANTHER" id="PTHR12630">
    <property type="entry name" value="N-LINKED OLIGOSACCHARIDE PROCESSING"/>
    <property type="match status" value="1"/>
</dbReference>
<dbReference type="Pfam" id="PF12999">
    <property type="entry name" value="PRKCSH-like"/>
    <property type="match status" value="1"/>
</dbReference>
<dbReference type="Pfam" id="PF13015">
    <property type="entry name" value="PRKCSH_1"/>
    <property type="match status" value="1"/>
</dbReference>
<dbReference type="SUPFAM" id="SSF50911">
    <property type="entry name" value="Mannose 6-phosphate receptor domain"/>
    <property type="match status" value="1"/>
</dbReference>
<dbReference type="PROSITE" id="PS00014">
    <property type="entry name" value="ER_TARGET"/>
    <property type="match status" value="1"/>
</dbReference>
<dbReference type="PROSITE" id="PS51914">
    <property type="entry name" value="MRH"/>
    <property type="match status" value="1"/>
</dbReference>
<keyword id="KW-0175">Coiled coil</keyword>
<keyword id="KW-1015">Disulfide bond</keyword>
<keyword id="KW-0256">Endoplasmic reticulum</keyword>
<keyword id="KW-1185">Reference proteome</keyword>
<keyword id="KW-0732">Signal</keyword>
<feature type="signal peptide" evidence="2">
    <location>
        <begin position="1"/>
        <end position="26"/>
    </location>
</feature>
<feature type="chain" id="PRO_0000423830" description="Glucosidase 2 subunit beta">
    <location>
        <begin position="27"/>
        <end position="583"/>
    </location>
</feature>
<feature type="domain" description="MRH" evidence="3">
    <location>
        <begin position="455"/>
        <end position="562"/>
    </location>
</feature>
<feature type="coiled-coil region" evidence="2">
    <location>
        <begin position="130"/>
        <end position="252"/>
    </location>
</feature>
<feature type="short sequence motif" description="Prevents secretion from ER" evidence="4">
    <location>
        <begin position="580"/>
        <end position="583"/>
    </location>
</feature>
<feature type="disulfide bond" evidence="1">
    <location>
        <begin position="91"/>
        <end position="115"/>
    </location>
</feature>
<feature type="disulfide bond" evidence="3">
    <location>
        <begin position="457"/>
        <end position="470"/>
    </location>
</feature>
<feature type="disulfide bond" evidence="3">
    <location>
        <begin position="519"/>
        <end position="548"/>
    </location>
</feature>
<feature type="disulfide bond" evidence="3">
    <location>
        <begin position="533"/>
        <end position="560"/>
    </location>
</feature>
<name>GLU2B_MYCMD</name>
<proteinExistence type="inferred from homology"/>
<sequence length="583" mass="64265">MVRLNLAVVALAAGALSASASASSSATPLRGLLTDAAKYQPTKDAQSQLRWKCLDGSKELSWSAVNDDYCDCPDGSDEPGTSACPNSSFYCHNTGHMPAYIRSSRVDDGICDPECCDGSDESDGKIRCPNRCEKVGKEYRKKLAELDNLRRAGAKVRDKYIAEGRKQKELLHAEIAKLEIEVQVATENEARFKAELTRAETSDKALIDAKVKTPLYTKLVDYQNAIRALHVKNAALKAELQTLTLLLDDLAKGYNPNYQDMAVKGAVVAYKEWRGIASAAAAATATGEVKEEGENNVDQIAGENTKLNELLDEGDWPWAKLSTLLSDDPLDLMDRGLGGALDDKRVYASETDGGLLFRIHEYLPDGIVPYFEAMVDTLLDVLMKANVITDVKRMRPKSSVGSESEPETVSVARRAHTDAAAHLSRTTHELSSLKQKLSEFSTRYGRSAEFKALENKCFSKDMGEYTYEYCFFGRATQIPNNGGAQISLGTFTNFNPKHDKSADEDAYWLQQIYARGQKCWNGPERSAIVDLECSTENKVLDVFEAEKCIYSIKVATPAVCFPPQQQQAQQTQQDGGHQVKDEL</sequence>
<comment type="function">
    <text evidence="1">Subunit of glucosidase 2, which cleaves sequentially the 2 innermost alpha-1,3-linked glucose residues from the Glc(2)Man(9)GlcNAc(2) oligosaccharide precursor of immature glycoproteins in the endoplasmic reticulum (ER). Specifically required for the cleavage of the final glucose. The subunit beta retains the catalytic subunit alpha in the ER (By similarity).</text>
</comment>
<comment type="subunit">
    <text>Heterodimer of a catalytic subunit alpha and a subunit beta.</text>
</comment>
<comment type="subcellular location">
    <subcellularLocation>
        <location evidence="4">Endoplasmic reticulum</location>
    </subcellularLocation>
</comment>
<evidence type="ECO:0000250" key="1"/>
<evidence type="ECO:0000255" key="2"/>
<evidence type="ECO:0000255" key="3">
    <source>
        <dbReference type="PROSITE-ProRule" id="PRU01262"/>
    </source>
</evidence>
<evidence type="ECO:0000255" key="4">
    <source>
        <dbReference type="PROSITE-ProRule" id="PRU10138"/>
    </source>
</evidence>
<organism>
    <name type="scientific">Mycosarcoma maydis</name>
    <name type="common">Corn smut fungus</name>
    <name type="synonym">Ustilago maydis</name>
    <dbReference type="NCBI Taxonomy" id="5270"/>
    <lineage>
        <taxon>Eukaryota</taxon>
        <taxon>Fungi</taxon>
        <taxon>Dikarya</taxon>
        <taxon>Basidiomycota</taxon>
        <taxon>Ustilaginomycotina</taxon>
        <taxon>Ustilaginomycetes</taxon>
        <taxon>Ustilaginales</taxon>
        <taxon>Ustilaginaceae</taxon>
        <taxon>Mycosarcoma</taxon>
    </lineage>
</organism>
<gene>
    <name type="ORF">UMAG_12045</name>
</gene>